<keyword id="KW-0269">Exonuclease</keyword>
<keyword id="KW-0378">Hydrolase</keyword>
<keyword id="KW-0460">Magnesium</keyword>
<keyword id="KW-0479">Metal-binding</keyword>
<keyword id="KW-0540">Nuclease</keyword>
<keyword id="KW-0819">tRNA processing</keyword>
<evidence type="ECO:0000255" key="1">
    <source>
        <dbReference type="HAMAP-Rule" id="MF_00157"/>
    </source>
</evidence>
<evidence type="ECO:0000256" key="2">
    <source>
        <dbReference type="SAM" id="MobiDB-lite"/>
    </source>
</evidence>
<gene>
    <name evidence="1" type="primary">rnt</name>
    <name type="ordered locus">Pput_1126</name>
</gene>
<dbReference type="EC" id="3.1.13.-" evidence="1"/>
<dbReference type="EMBL" id="CP000712">
    <property type="protein sequence ID" value="ABQ77287.1"/>
    <property type="molecule type" value="Genomic_DNA"/>
</dbReference>
<dbReference type="SMR" id="A5VZH7"/>
<dbReference type="KEGG" id="ppf:Pput_1126"/>
<dbReference type="eggNOG" id="COG0847">
    <property type="taxonomic scope" value="Bacteria"/>
</dbReference>
<dbReference type="HOGENOM" id="CLU_082724_0_0_6"/>
<dbReference type="GO" id="GO:0005829">
    <property type="term" value="C:cytosol"/>
    <property type="evidence" value="ECO:0007669"/>
    <property type="project" value="TreeGrafter"/>
</dbReference>
<dbReference type="GO" id="GO:0008408">
    <property type="term" value="F:3'-5' exonuclease activity"/>
    <property type="evidence" value="ECO:0007669"/>
    <property type="project" value="TreeGrafter"/>
</dbReference>
<dbReference type="GO" id="GO:0000287">
    <property type="term" value="F:magnesium ion binding"/>
    <property type="evidence" value="ECO:0007669"/>
    <property type="project" value="UniProtKB-UniRule"/>
</dbReference>
<dbReference type="GO" id="GO:0003676">
    <property type="term" value="F:nucleic acid binding"/>
    <property type="evidence" value="ECO:0007669"/>
    <property type="project" value="InterPro"/>
</dbReference>
<dbReference type="GO" id="GO:0016896">
    <property type="term" value="F:RNA exonuclease activity, producing 5'-phosphomonoesters"/>
    <property type="evidence" value="ECO:0007669"/>
    <property type="project" value="UniProtKB-UniRule"/>
</dbReference>
<dbReference type="GO" id="GO:0045004">
    <property type="term" value="P:DNA replication proofreading"/>
    <property type="evidence" value="ECO:0007669"/>
    <property type="project" value="TreeGrafter"/>
</dbReference>
<dbReference type="GO" id="GO:0008033">
    <property type="term" value="P:tRNA processing"/>
    <property type="evidence" value="ECO:0007669"/>
    <property type="project" value="UniProtKB-KW"/>
</dbReference>
<dbReference type="CDD" id="cd06134">
    <property type="entry name" value="RNaseT"/>
    <property type="match status" value="1"/>
</dbReference>
<dbReference type="FunFam" id="3.30.420.10:FF:000009">
    <property type="entry name" value="Ribonuclease T"/>
    <property type="match status" value="1"/>
</dbReference>
<dbReference type="Gene3D" id="3.30.420.10">
    <property type="entry name" value="Ribonuclease H-like superfamily/Ribonuclease H"/>
    <property type="match status" value="1"/>
</dbReference>
<dbReference type="HAMAP" id="MF_00157">
    <property type="entry name" value="RNase_T"/>
    <property type="match status" value="1"/>
</dbReference>
<dbReference type="InterPro" id="IPR013520">
    <property type="entry name" value="Exonuclease_RNaseT/DNA_pol3"/>
</dbReference>
<dbReference type="InterPro" id="IPR005987">
    <property type="entry name" value="RNase_T"/>
</dbReference>
<dbReference type="InterPro" id="IPR012337">
    <property type="entry name" value="RNaseH-like_sf"/>
</dbReference>
<dbReference type="InterPro" id="IPR036397">
    <property type="entry name" value="RNaseH_sf"/>
</dbReference>
<dbReference type="NCBIfam" id="TIGR01298">
    <property type="entry name" value="RNaseT"/>
    <property type="match status" value="1"/>
</dbReference>
<dbReference type="PANTHER" id="PTHR30231">
    <property type="entry name" value="DNA POLYMERASE III SUBUNIT EPSILON"/>
    <property type="match status" value="1"/>
</dbReference>
<dbReference type="PANTHER" id="PTHR30231:SF2">
    <property type="entry name" value="RIBONUCLEASE T"/>
    <property type="match status" value="1"/>
</dbReference>
<dbReference type="Pfam" id="PF00929">
    <property type="entry name" value="RNase_T"/>
    <property type="match status" value="1"/>
</dbReference>
<dbReference type="SMART" id="SM00479">
    <property type="entry name" value="EXOIII"/>
    <property type="match status" value="1"/>
</dbReference>
<dbReference type="SUPFAM" id="SSF53098">
    <property type="entry name" value="Ribonuclease H-like"/>
    <property type="match status" value="1"/>
</dbReference>
<accession>A5VZH7</accession>
<proteinExistence type="inferred from homology"/>
<organism>
    <name type="scientific">Pseudomonas putida (strain ATCC 700007 / DSM 6899 / JCM 31910 / BCRC 17059 / LMG 24140 / F1)</name>
    <dbReference type="NCBI Taxonomy" id="351746"/>
    <lineage>
        <taxon>Bacteria</taxon>
        <taxon>Pseudomonadati</taxon>
        <taxon>Pseudomonadota</taxon>
        <taxon>Gammaproteobacteria</taxon>
        <taxon>Pseudomonadales</taxon>
        <taxon>Pseudomonadaceae</taxon>
        <taxon>Pseudomonas</taxon>
    </lineage>
</organism>
<reference key="1">
    <citation type="submission" date="2007-05" db="EMBL/GenBank/DDBJ databases">
        <title>Complete sequence of Pseudomonas putida F1.</title>
        <authorList>
            <consortium name="US DOE Joint Genome Institute"/>
            <person name="Copeland A."/>
            <person name="Lucas S."/>
            <person name="Lapidus A."/>
            <person name="Barry K."/>
            <person name="Detter J.C."/>
            <person name="Glavina del Rio T."/>
            <person name="Hammon N."/>
            <person name="Israni S."/>
            <person name="Dalin E."/>
            <person name="Tice H."/>
            <person name="Pitluck S."/>
            <person name="Chain P."/>
            <person name="Malfatti S."/>
            <person name="Shin M."/>
            <person name="Vergez L."/>
            <person name="Schmutz J."/>
            <person name="Larimer F."/>
            <person name="Land M."/>
            <person name="Hauser L."/>
            <person name="Kyrpides N."/>
            <person name="Lykidis A."/>
            <person name="Parales R."/>
            <person name="Richardson P."/>
        </authorList>
    </citation>
    <scope>NUCLEOTIDE SEQUENCE [LARGE SCALE GENOMIC DNA]</scope>
    <source>
        <strain>ATCC 700007 / DSM 6899 / JCM 31910 / BCRC 17059 / LMG 24140 / F1</strain>
    </source>
</reference>
<sequence>MSEDLYEDDLDTQGSSGPRHPMAERFRGYLPVVVDVETGGFNSATDALLEIAAVTIGMDEKGFLFPEHTYFHRVEPFEGANIEPAALEFTGIKLDHPLRMAVSEESAMTDIFRGVRKALKANGCKRAILVGHNSSFDLGFLNAAVARNDLKRNPFHPFSSFDTATLAGLAYGQTVLARACQSADIDFDGREAHSARYDTEKTAELFCGIVNRWKEMGGWRDFND</sequence>
<protein>
    <recommendedName>
        <fullName evidence="1">Ribonuclease T</fullName>
        <ecNumber evidence="1">3.1.13.-</ecNumber>
    </recommendedName>
    <alternativeName>
        <fullName evidence="1">Exoribonuclease T</fullName>
        <shortName evidence="1">RNase T</shortName>
    </alternativeName>
</protein>
<comment type="function">
    <text evidence="1">Trims short 3' overhangs of a variety of RNA species, leaving a one or two nucleotide 3' overhang. Responsible for the end-turnover of tRNA: specifically removes the terminal AMP residue from uncharged tRNA (tRNA-C-C-A). Also appears to be involved in tRNA biosynthesis.</text>
</comment>
<comment type="cofactor">
    <cofactor evidence="1">
        <name>Mg(2+)</name>
        <dbReference type="ChEBI" id="CHEBI:18420"/>
    </cofactor>
    <text evidence="1">Binds two Mg(2+) per subunit. The active form of the enzyme binds two Mg(2+) ions in its active site. The first Mg(2+) forms only one salt bridge with the protein.</text>
</comment>
<comment type="subunit">
    <text evidence="1">Homodimer.</text>
</comment>
<comment type="similarity">
    <text evidence="1">Belongs to the RNase T family.</text>
</comment>
<name>RNT_PSEP1</name>
<feature type="chain" id="PRO_1000011407" description="Ribonuclease T">
    <location>
        <begin position="1"/>
        <end position="224"/>
    </location>
</feature>
<feature type="domain" description="Exonuclease" evidence="1">
    <location>
        <begin position="32"/>
        <end position="206"/>
    </location>
</feature>
<feature type="region of interest" description="Disordered" evidence="2">
    <location>
        <begin position="1"/>
        <end position="22"/>
    </location>
</feature>
<feature type="compositionally biased region" description="Acidic residues" evidence="2">
    <location>
        <begin position="1"/>
        <end position="11"/>
    </location>
</feature>
<feature type="active site" description="Proton donor/acceptor" evidence="1">
    <location>
        <position position="193"/>
    </location>
</feature>
<feature type="binding site" evidence="1">
    <location>
        <position position="35"/>
    </location>
    <ligand>
        <name>Mg(2+)</name>
        <dbReference type="ChEBI" id="CHEBI:18420"/>
        <label>1</label>
        <note>catalytic</note>
    </ligand>
</feature>
<feature type="binding site" evidence="1">
    <location>
        <position position="35"/>
    </location>
    <ligand>
        <name>Mg(2+)</name>
        <dbReference type="ChEBI" id="CHEBI:18420"/>
        <label>2</label>
        <note>catalytic</note>
    </ligand>
</feature>
<feature type="binding site" evidence="1">
    <location>
        <position position="37"/>
    </location>
    <ligand>
        <name>Mg(2+)</name>
        <dbReference type="ChEBI" id="CHEBI:18420"/>
        <label>2</label>
        <note>catalytic</note>
    </ligand>
</feature>
<feature type="binding site" evidence="1">
    <location>
        <position position="193"/>
    </location>
    <ligand>
        <name>Mg(2+)</name>
        <dbReference type="ChEBI" id="CHEBI:18420"/>
        <label>2</label>
        <note>catalytic</note>
    </ligand>
</feature>
<feature type="binding site" evidence="1">
    <location>
        <position position="198"/>
    </location>
    <ligand>
        <name>Mg(2+)</name>
        <dbReference type="ChEBI" id="CHEBI:18420"/>
        <label>2</label>
        <note>catalytic</note>
    </ligand>
</feature>
<feature type="site" description="Important for substrate binding and specificity" evidence="1">
    <location>
        <position position="41"/>
    </location>
</feature>
<feature type="site" description="Important for substrate binding and specificity" evidence="1">
    <location>
        <position position="89"/>
    </location>
</feature>
<feature type="site" description="Important for substrate binding and specificity" evidence="1">
    <location>
        <position position="136"/>
    </location>
</feature>
<feature type="site" description="Important for substrate binding and specificity" evidence="1">
    <location>
        <position position="158"/>
    </location>
</feature>